<evidence type="ECO:0000250" key="1"/>
<evidence type="ECO:0000255" key="2"/>
<evidence type="ECO:0000256" key="3">
    <source>
        <dbReference type="SAM" id="MobiDB-lite"/>
    </source>
</evidence>
<evidence type="ECO:0000305" key="4"/>
<accession>Q42882</accession>
<sequence>MAASIGALKSSPSSHNCINERRNDSTRAISSRNLSFSSSHLAGDKLMPVSSLRSQGVRFNVRRSPLIVSPKAVSDSQNSQTCLDPDASRSVLGIILGGGAGTRLYPLTKKRAKPAVPLGANYRLIDIPVSNCLNSNISKIYVLTQFNSASLNRHLSRAYASNMGEYKNEGFVEVLAAQQSPENPDWFQGTADAVRQYLWLFEEHNVLEYLILAGDHLYRMDYEKFIQAHRETDADITVAALPMDEKRATAFGLMKIDEEGRIIEFAEKPQGEQLQAMKVDTTILGLDDKRAKEMPFIASMGIYVISKDVMLNLLRDKFPGANDFGSEVIPGATSLGMRVQAYLYDGYWEDIGTIEAFYNANLGITKKPVPDFSFYDRSAPIYTQPRYLPPSKMLDADVTDSVIGEGCVIKNCKIHHSVVGLRSCISEGAIIEDSLLMGADYYETDAERKLLAAKGSVPIGIGKNCLYKRAIIDKNARIGDNVKIINKDNVQEAARETDGYFIKSGIVTVIKDALIPSGIVI</sequence>
<organism>
    <name type="scientific">Solanum lycopersicum</name>
    <name type="common">Tomato</name>
    <name type="synonym">Lycopersicon esculentum</name>
    <dbReference type="NCBI Taxonomy" id="4081"/>
    <lineage>
        <taxon>Eukaryota</taxon>
        <taxon>Viridiplantae</taxon>
        <taxon>Streptophyta</taxon>
        <taxon>Embryophyta</taxon>
        <taxon>Tracheophyta</taxon>
        <taxon>Spermatophyta</taxon>
        <taxon>Magnoliopsida</taxon>
        <taxon>eudicotyledons</taxon>
        <taxon>Gunneridae</taxon>
        <taxon>Pentapetalae</taxon>
        <taxon>asterids</taxon>
        <taxon>lamiids</taxon>
        <taxon>Solanales</taxon>
        <taxon>Solanaceae</taxon>
        <taxon>Solanoideae</taxon>
        <taxon>Solaneae</taxon>
        <taxon>Solanum</taxon>
        <taxon>Solanum subgen. Lycopersicon</taxon>
    </lineage>
</organism>
<proteinExistence type="evidence at transcript level"/>
<protein>
    <recommendedName>
        <fullName>Glucose-1-phosphate adenylyltransferase small subunit, chloroplastic</fullName>
        <ecNumber>2.7.7.27</ecNumber>
    </recommendedName>
    <alternativeName>
        <fullName>ADP-glucose pyrophosphorylase</fullName>
    </alternativeName>
    <alternativeName>
        <fullName>ADP-glucose synthase</fullName>
    </alternativeName>
    <alternativeName>
        <fullName>AGPase B</fullName>
    </alternativeName>
    <alternativeName>
        <fullName>Alpha-D-glucose-1-phosphate adenyl transferase</fullName>
    </alternativeName>
</protein>
<feature type="transit peptide" description="Chloroplast" evidence="2">
    <location>
        <begin position="1"/>
        <end position="72"/>
    </location>
</feature>
<feature type="chain" id="PRO_0000011153" description="Glucose-1-phosphate adenylyltransferase small subunit, chloroplastic">
    <location>
        <begin position="73"/>
        <end position="521"/>
    </location>
</feature>
<feature type="region of interest" description="Disordered" evidence="3">
    <location>
        <begin position="1"/>
        <end position="24"/>
    </location>
</feature>
<reference key="1">
    <citation type="online journal article" date="1995" name="Plant Gene Register">
        <title>ADP-glucose pyrophosphorylase small subunit cDNA from tomato fruit.</title>
        <authorList>
            <person name="Chen B.-Y."/>
            <person name="Janes H.W."/>
        </authorList>
        <locator>PGR95-102</locator>
    </citation>
    <scope>NUCLEOTIDE SEQUENCE [MRNA]</scope>
    <source>
        <tissue>Fruit</tissue>
    </source>
</reference>
<keyword id="KW-0021">Allosteric enzyme</keyword>
<keyword id="KW-0067">ATP-binding</keyword>
<keyword id="KW-0150">Chloroplast</keyword>
<keyword id="KW-0547">Nucleotide-binding</keyword>
<keyword id="KW-0548">Nucleotidyltransferase</keyword>
<keyword id="KW-0934">Plastid</keyword>
<keyword id="KW-1185">Reference proteome</keyword>
<keyword id="KW-0750">Starch biosynthesis</keyword>
<keyword id="KW-0808">Transferase</keyword>
<keyword id="KW-0809">Transit peptide</keyword>
<name>GLGS_SOLLC</name>
<dbReference type="EC" id="2.7.7.27"/>
<dbReference type="EMBL" id="L41126">
    <property type="protein sequence ID" value="AAB00482.1"/>
    <property type="molecule type" value="mRNA"/>
</dbReference>
<dbReference type="SMR" id="Q42882"/>
<dbReference type="FunCoup" id="Q42882">
    <property type="interactions" value="1134"/>
</dbReference>
<dbReference type="STRING" id="4081.Q42882"/>
<dbReference type="PaxDb" id="4081-Solyc07g056140.2.1"/>
<dbReference type="eggNOG" id="KOG1322">
    <property type="taxonomic scope" value="Eukaryota"/>
</dbReference>
<dbReference type="InParanoid" id="Q42882"/>
<dbReference type="SABIO-RK" id="Q42882"/>
<dbReference type="UniPathway" id="UPA00152"/>
<dbReference type="Proteomes" id="UP000004994">
    <property type="component" value="Unplaced"/>
</dbReference>
<dbReference type="ExpressionAtlas" id="Q42882">
    <property type="expression patterns" value="baseline and differential"/>
</dbReference>
<dbReference type="GO" id="GO:0009507">
    <property type="term" value="C:chloroplast"/>
    <property type="evidence" value="ECO:0007669"/>
    <property type="project" value="UniProtKB-SubCell"/>
</dbReference>
<dbReference type="GO" id="GO:0005524">
    <property type="term" value="F:ATP binding"/>
    <property type="evidence" value="ECO:0007669"/>
    <property type="project" value="UniProtKB-KW"/>
</dbReference>
<dbReference type="GO" id="GO:0008878">
    <property type="term" value="F:glucose-1-phosphate adenylyltransferase activity"/>
    <property type="evidence" value="ECO:0007669"/>
    <property type="project" value="UniProtKB-EC"/>
</dbReference>
<dbReference type="GO" id="GO:0005978">
    <property type="term" value="P:glycogen biosynthetic process"/>
    <property type="evidence" value="ECO:0007669"/>
    <property type="project" value="InterPro"/>
</dbReference>
<dbReference type="GO" id="GO:0019252">
    <property type="term" value="P:starch biosynthetic process"/>
    <property type="evidence" value="ECO:0007669"/>
    <property type="project" value="UniProtKB-UniPathway"/>
</dbReference>
<dbReference type="CDD" id="cd02508">
    <property type="entry name" value="ADP_Glucose_PP"/>
    <property type="match status" value="1"/>
</dbReference>
<dbReference type="CDD" id="cd04651">
    <property type="entry name" value="LbH_G1P_AT_C"/>
    <property type="match status" value="1"/>
</dbReference>
<dbReference type="FunFam" id="2.160.10.10:FF:000010">
    <property type="entry name" value="Glucose-1-phosphate adenylyltransferase"/>
    <property type="match status" value="1"/>
</dbReference>
<dbReference type="FunFam" id="3.90.550.10:FF:000030">
    <property type="entry name" value="Glucose-1-phosphate adenylyltransferase"/>
    <property type="match status" value="1"/>
</dbReference>
<dbReference type="Gene3D" id="2.160.10.10">
    <property type="entry name" value="Hexapeptide repeat proteins"/>
    <property type="match status" value="1"/>
</dbReference>
<dbReference type="Gene3D" id="3.90.550.10">
    <property type="entry name" value="Spore Coat Polysaccharide Biosynthesis Protein SpsA, Chain A"/>
    <property type="match status" value="1"/>
</dbReference>
<dbReference type="InterPro" id="IPR011831">
    <property type="entry name" value="ADP-Glc_PPase"/>
</dbReference>
<dbReference type="InterPro" id="IPR005836">
    <property type="entry name" value="ADP_Glu_pyroP_CS"/>
</dbReference>
<dbReference type="InterPro" id="IPR005835">
    <property type="entry name" value="NTP_transferase_dom"/>
</dbReference>
<dbReference type="InterPro" id="IPR029044">
    <property type="entry name" value="Nucleotide-diphossugar_trans"/>
</dbReference>
<dbReference type="InterPro" id="IPR011004">
    <property type="entry name" value="Trimer_LpxA-like_sf"/>
</dbReference>
<dbReference type="NCBIfam" id="TIGR02091">
    <property type="entry name" value="glgC"/>
    <property type="match status" value="1"/>
</dbReference>
<dbReference type="NCBIfam" id="NF002772">
    <property type="entry name" value="PRK02862.1"/>
    <property type="match status" value="1"/>
</dbReference>
<dbReference type="PANTHER" id="PTHR43523:SF12">
    <property type="entry name" value="GLUCOSE-1-PHOSPHATE ADENYLYLTRANSFERASE LARGE SUBUNIT 1, CHLOROPLASTIC-RELATED"/>
    <property type="match status" value="1"/>
</dbReference>
<dbReference type="PANTHER" id="PTHR43523">
    <property type="entry name" value="GLUCOSE-1-PHOSPHATE ADENYLYLTRANSFERASE-RELATED"/>
    <property type="match status" value="1"/>
</dbReference>
<dbReference type="Pfam" id="PF25247">
    <property type="entry name" value="LbH_GLGC"/>
    <property type="match status" value="1"/>
</dbReference>
<dbReference type="Pfam" id="PF00483">
    <property type="entry name" value="NTP_transferase"/>
    <property type="match status" value="1"/>
</dbReference>
<dbReference type="SUPFAM" id="SSF53448">
    <property type="entry name" value="Nucleotide-diphospho-sugar transferases"/>
    <property type="match status" value="1"/>
</dbReference>
<dbReference type="SUPFAM" id="SSF51161">
    <property type="entry name" value="Trimeric LpxA-like enzymes"/>
    <property type="match status" value="1"/>
</dbReference>
<dbReference type="PROSITE" id="PS00808">
    <property type="entry name" value="ADP_GLC_PYROPHOSPH_1"/>
    <property type="match status" value="1"/>
</dbReference>
<dbReference type="PROSITE" id="PS00809">
    <property type="entry name" value="ADP_GLC_PYROPHOSPH_2"/>
    <property type="match status" value="1"/>
</dbReference>
<dbReference type="PROSITE" id="PS00810">
    <property type="entry name" value="ADP_GLC_PYROPHOSPH_3"/>
    <property type="match status" value="1"/>
</dbReference>
<comment type="function">
    <text>This protein plays a role in synthesis of starch. It catalyzes the synthesis of the activated glycosyl donor, ADP-glucose from Glc-1-P and ATP.</text>
</comment>
<comment type="catalytic activity">
    <reaction>
        <text>alpha-D-glucose 1-phosphate + ATP + H(+) = ADP-alpha-D-glucose + diphosphate</text>
        <dbReference type="Rhea" id="RHEA:12120"/>
        <dbReference type="ChEBI" id="CHEBI:15378"/>
        <dbReference type="ChEBI" id="CHEBI:30616"/>
        <dbReference type="ChEBI" id="CHEBI:33019"/>
        <dbReference type="ChEBI" id="CHEBI:57498"/>
        <dbReference type="ChEBI" id="CHEBI:58601"/>
        <dbReference type="EC" id="2.7.7.27"/>
    </reaction>
</comment>
<comment type="activity regulation">
    <text>Activated by 3'phosphoglycerate, inhibited by orthophosphate. Allosteric regulation.</text>
</comment>
<comment type="pathway">
    <text>Glycan biosynthesis; starch biosynthesis.</text>
</comment>
<comment type="subunit">
    <text evidence="1">Heterotetramer.</text>
</comment>
<comment type="subcellular location">
    <subcellularLocation>
        <location evidence="1">Plastid</location>
        <location evidence="1">Chloroplast</location>
    </subcellularLocation>
</comment>
<comment type="similarity">
    <text evidence="4">Belongs to the bacterial/plant glucose-1-phosphate adenylyltransferase family.</text>
</comment>